<accession>Q15NA2</accession>
<feature type="chain" id="PRO_5000125908" description="UPF0391 membrane protein Patl_4137">
    <location>
        <begin position="1"/>
        <end position="58"/>
    </location>
</feature>
<feature type="transmembrane region" description="Helical" evidence="1">
    <location>
        <begin position="4"/>
        <end position="24"/>
    </location>
</feature>
<feature type="transmembrane region" description="Helical" evidence="1">
    <location>
        <begin position="27"/>
        <end position="47"/>
    </location>
</feature>
<gene>
    <name type="ordered locus">Patl_4137</name>
</gene>
<organism>
    <name type="scientific">Pseudoalteromonas atlantica (strain T6c / ATCC BAA-1087)</name>
    <dbReference type="NCBI Taxonomy" id="3042615"/>
    <lineage>
        <taxon>Bacteria</taxon>
        <taxon>Pseudomonadati</taxon>
        <taxon>Pseudomonadota</taxon>
        <taxon>Gammaproteobacteria</taxon>
        <taxon>Alteromonadales</taxon>
        <taxon>Alteromonadaceae</taxon>
        <taxon>Paraglaciecola</taxon>
    </lineage>
</organism>
<protein>
    <recommendedName>
        <fullName evidence="1">UPF0391 membrane protein Patl_4137</fullName>
    </recommendedName>
</protein>
<proteinExistence type="inferred from homology"/>
<reference key="1">
    <citation type="submission" date="2006-06" db="EMBL/GenBank/DDBJ databases">
        <title>Complete sequence of Pseudoalteromonas atlantica T6c.</title>
        <authorList>
            <consortium name="US DOE Joint Genome Institute"/>
            <person name="Copeland A."/>
            <person name="Lucas S."/>
            <person name="Lapidus A."/>
            <person name="Barry K."/>
            <person name="Detter J.C."/>
            <person name="Glavina del Rio T."/>
            <person name="Hammon N."/>
            <person name="Israni S."/>
            <person name="Dalin E."/>
            <person name="Tice H."/>
            <person name="Pitluck S."/>
            <person name="Saunders E."/>
            <person name="Brettin T."/>
            <person name="Bruce D."/>
            <person name="Han C."/>
            <person name="Tapia R."/>
            <person name="Gilna P."/>
            <person name="Schmutz J."/>
            <person name="Larimer F."/>
            <person name="Land M."/>
            <person name="Hauser L."/>
            <person name="Kyrpides N."/>
            <person name="Kim E."/>
            <person name="Karls A.C."/>
            <person name="Bartlett D."/>
            <person name="Higgins B.P."/>
            <person name="Richardson P."/>
        </authorList>
    </citation>
    <scope>NUCLEOTIDE SEQUENCE [LARGE SCALE GENOMIC DNA]</scope>
    <source>
        <strain>T6c / ATCC BAA-1087</strain>
    </source>
</reference>
<comment type="subcellular location">
    <subcellularLocation>
        <location evidence="1">Cell membrane</location>
        <topology evidence="1">Multi-pass membrane protein</topology>
    </subcellularLocation>
</comment>
<comment type="similarity">
    <text evidence="1">Belongs to the UPF0391 family.</text>
</comment>
<sequence>MLGWALTFLIIAILAGVMGFGGIAGTAAGIAKIIFFVFLVLLVLSLVANAIRGKGPKV</sequence>
<name>Y4137_PSEA6</name>
<dbReference type="EMBL" id="CP000388">
    <property type="protein sequence ID" value="ABG42636.1"/>
    <property type="molecule type" value="Genomic_DNA"/>
</dbReference>
<dbReference type="STRING" id="342610.Patl_4137"/>
<dbReference type="KEGG" id="pat:Patl_4137"/>
<dbReference type="eggNOG" id="COG5487">
    <property type="taxonomic scope" value="Bacteria"/>
</dbReference>
<dbReference type="HOGENOM" id="CLU_187346_1_0_6"/>
<dbReference type="Proteomes" id="UP000001981">
    <property type="component" value="Chromosome"/>
</dbReference>
<dbReference type="GO" id="GO:0005886">
    <property type="term" value="C:plasma membrane"/>
    <property type="evidence" value="ECO:0007669"/>
    <property type="project" value="UniProtKB-SubCell"/>
</dbReference>
<dbReference type="HAMAP" id="MF_01361">
    <property type="entry name" value="UPF0391"/>
    <property type="match status" value="1"/>
</dbReference>
<dbReference type="InterPro" id="IPR009760">
    <property type="entry name" value="DUF1328"/>
</dbReference>
<dbReference type="NCBIfam" id="NF010226">
    <property type="entry name" value="PRK13682.1-1"/>
    <property type="match status" value="1"/>
</dbReference>
<dbReference type="NCBIfam" id="NF010228">
    <property type="entry name" value="PRK13682.1-3"/>
    <property type="match status" value="1"/>
</dbReference>
<dbReference type="NCBIfam" id="NF010229">
    <property type="entry name" value="PRK13682.1-4"/>
    <property type="match status" value="1"/>
</dbReference>
<dbReference type="Pfam" id="PF07043">
    <property type="entry name" value="DUF1328"/>
    <property type="match status" value="1"/>
</dbReference>
<dbReference type="PIRSF" id="PIRSF036466">
    <property type="entry name" value="UCP036466"/>
    <property type="match status" value="1"/>
</dbReference>
<evidence type="ECO:0000255" key="1">
    <source>
        <dbReference type="HAMAP-Rule" id="MF_01361"/>
    </source>
</evidence>
<keyword id="KW-1003">Cell membrane</keyword>
<keyword id="KW-0472">Membrane</keyword>
<keyword id="KW-0812">Transmembrane</keyword>
<keyword id="KW-1133">Transmembrane helix</keyword>